<sequence>MRNYELTTITRVSSREVTKSEVQDTLNKFSVSVTADEDWGQRKLWHPIKHEEQGIFHHYKCSAEPSAIEKVEKEFLINQNILRSMVVRLDG</sequence>
<comment type="function">
    <text evidence="1">Binds together with bS18 to 16S ribosomal RNA.</text>
</comment>
<comment type="similarity">
    <text evidence="1">Belongs to the bacterial ribosomal protein bS6 family.</text>
</comment>
<keyword id="KW-0687">Ribonucleoprotein</keyword>
<keyword id="KW-0689">Ribosomal protein</keyword>
<keyword id="KW-0694">RNA-binding</keyword>
<keyword id="KW-0699">rRNA-binding</keyword>
<gene>
    <name evidence="1" type="primary">rpsF</name>
    <name type="ordered locus">LBJ_1193</name>
</gene>
<evidence type="ECO:0000255" key="1">
    <source>
        <dbReference type="HAMAP-Rule" id="MF_00360"/>
    </source>
</evidence>
<evidence type="ECO:0000305" key="2"/>
<accession>Q04TH3</accession>
<feature type="chain" id="PRO_1000005288" description="Small ribosomal subunit protein bS6">
    <location>
        <begin position="1"/>
        <end position="91"/>
    </location>
</feature>
<dbReference type="EMBL" id="CP000350">
    <property type="protein sequence ID" value="ABJ75797.1"/>
    <property type="molecule type" value="Genomic_DNA"/>
</dbReference>
<dbReference type="RefSeq" id="WP_002749849.1">
    <property type="nucleotide sequence ID" value="NC_008510.1"/>
</dbReference>
<dbReference type="SMR" id="Q04TH3"/>
<dbReference type="KEGG" id="lbj:LBJ_1193"/>
<dbReference type="HOGENOM" id="CLU_113441_5_1_12"/>
<dbReference type="Proteomes" id="UP000000656">
    <property type="component" value="Chromosome 1"/>
</dbReference>
<dbReference type="GO" id="GO:1990904">
    <property type="term" value="C:ribonucleoprotein complex"/>
    <property type="evidence" value="ECO:0007669"/>
    <property type="project" value="UniProtKB-KW"/>
</dbReference>
<dbReference type="GO" id="GO:0005840">
    <property type="term" value="C:ribosome"/>
    <property type="evidence" value="ECO:0007669"/>
    <property type="project" value="UniProtKB-KW"/>
</dbReference>
<dbReference type="GO" id="GO:0019843">
    <property type="term" value="F:rRNA binding"/>
    <property type="evidence" value="ECO:0007669"/>
    <property type="project" value="UniProtKB-UniRule"/>
</dbReference>
<dbReference type="GO" id="GO:0003735">
    <property type="term" value="F:structural constituent of ribosome"/>
    <property type="evidence" value="ECO:0007669"/>
    <property type="project" value="InterPro"/>
</dbReference>
<dbReference type="GO" id="GO:0006412">
    <property type="term" value="P:translation"/>
    <property type="evidence" value="ECO:0007669"/>
    <property type="project" value="UniProtKB-UniRule"/>
</dbReference>
<dbReference type="CDD" id="cd00473">
    <property type="entry name" value="bS6"/>
    <property type="match status" value="1"/>
</dbReference>
<dbReference type="FunFam" id="3.30.70.60:FF:000009">
    <property type="entry name" value="30S ribosomal protein S6"/>
    <property type="match status" value="1"/>
</dbReference>
<dbReference type="Gene3D" id="3.30.70.60">
    <property type="match status" value="1"/>
</dbReference>
<dbReference type="HAMAP" id="MF_00360">
    <property type="entry name" value="Ribosomal_bS6"/>
    <property type="match status" value="1"/>
</dbReference>
<dbReference type="InterPro" id="IPR000529">
    <property type="entry name" value="Ribosomal_bS6"/>
</dbReference>
<dbReference type="InterPro" id="IPR035980">
    <property type="entry name" value="Ribosomal_bS6_sf"/>
</dbReference>
<dbReference type="InterPro" id="IPR020814">
    <property type="entry name" value="Ribosomal_S6_plastid/chlpt"/>
</dbReference>
<dbReference type="InterPro" id="IPR014717">
    <property type="entry name" value="Transl_elong_EF1B/ribsomal_bS6"/>
</dbReference>
<dbReference type="NCBIfam" id="TIGR00166">
    <property type="entry name" value="S6"/>
    <property type="match status" value="1"/>
</dbReference>
<dbReference type="Pfam" id="PF01250">
    <property type="entry name" value="Ribosomal_S6"/>
    <property type="match status" value="1"/>
</dbReference>
<dbReference type="SUPFAM" id="SSF54995">
    <property type="entry name" value="Ribosomal protein S6"/>
    <property type="match status" value="1"/>
</dbReference>
<proteinExistence type="inferred from homology"/>
<organism>
    <name type="scientific">Leptospira borgpetersenii serovar Hardjo-bovis (strain JB197)</name>
    <dbReference type="NCBI Taxonomy" id="355277"/>
    <lineage>
        <taxon>Bacteria</taxon>
        <taxon>Pseudomonadati</taxon>
        <taxon>Spirochaetota</taxon>
        <taxon>Spirochaetia</taxon>
        <taxon>Leptospirales</taxon>
        <taxon>Leptospiraceae</taxon>
        <taxon>Leptospira</taxon>
    </lineage>
</organism>
<name>RS6_LEPBJ</name>
<reference key="1">
    <citation type="journal article" date="2006" name="Proc. Natl. Acad. Sci. U.S.A.">
        <title>Genome reduction in Leptospira borgpetersenii reflects limited transmission potential.</title>
        <authorList>
            <person name="Bulach D.M."/>
            <person name="Zuerner R.L."/>
            <person name="Wilson P."/>
            <person name="Seemann T."/>
            <person name="McGrath A."/>
            <person name="Cullen P.A."/>
            <person name="Davis J."/>
            <person name="Johnson M."/>
            <person name="Kuczek E."/>
            <person name="Alt D.P."/>
            <person name="Peterson-Burch B."/>
            <person name="Coppel R.L."/>
            <person name="Rood J.I."/>
            <person name="Davies J.K."/>
            <person name="Adler B."/>
        </authorList>
    </citation>
    <scope>NUCLEOTIDE SEQUENCE [LARGE SCALE GENOMIC DNA]</scope>
    <source>
        <strain>JB197</strain>
    </source>
</reference>
<protein>
    <recommendedName>
        <fullName evidence="1">Small ribosomal subunit protein bS6</fullName>
    </recommendedName>
    <alternativeName>
        <fullName evidence="2">30S ribosomal protein S6</fullName>
    </alternativeName>
</protein>